<proteinExistence type="inferred from homology"/>
<organism>
    <name type="scientific">Cereibacter sphaeroides (strain KD131 / KCTC 12085)</name>
    <name type="common">Rhodobacter sphaeroides</name>
    <dbReference type="NCBI Taxonomy" id="557760"/>
    <lineage>
        <taxon>Bacteria</taxon>
        <taxon>Pseudomonadati</taxon>
        <taxon>Pseudomonadota</taxon>
        <taxon>Alphaproteobacteria</taxon>
        <taxon>Rhodobacterales</taxon>
        <taxon>Paracoccaceae</taxon>
        <taxon>Cereibacter</taxon>
    </lineage>
</organism>
<accession>B9KPP3</accession>
<sequence>MAKRDYYEVLGVSRTASADELKKAYRTKAKELHPDRNADNPQAEAQFKEVNEAYDVLRDADKKAAYDRYGHAAFEGGMGGGARAGGYGQQGDFASAFSDVFEDLFGDFMGGRGGAPRSRAQRGSDLRYNLRVTLDEAYRGVQKTINVPASVACDACKGTGAEGGAEAVTCPTCSGMGKVRAQQGFFTVERTCPTCNGMGQIVKNPCKVCHGAGRVEKERSLSVNIPAGVETGTRIRLAGEGEAGMRGGPSGDLYIFIEVREHALFQRDGVHLFCRVPVSIAAAALGGEVEVPTIDGGSSRVKIPAGSQTGKQMRLRGKGMPALRGGGAGDMLIELAVETPVNLTARQKELLREFEKLSEDNNPEGKSFFSKVKGFWDGMTG</sequence>
<keyword id="KW-0143">Chaperone</keyword>
<keyword id="KW-0963">Cytoplasm</keyword>
<keyword id="KW-0235">DNA replication</keyword>
<keyword id="KW-0479">Metal-binding</keyword>
<keyword id="KW-0677">Repeat</keyword>
<keyword id="KW-0346">Stress response</keyword>
<keyword id="KW-0862">Zinc</keyword>
<keyword id="KW-0863">Zinc-finger</keyword>
<protein>
    <recommendedName>
        <fullName evidence="1">Chaperone protein DnaJ</fullName>
    </recommendedName>
</protein>
<reference key="1">
    <citation type="journal article" date="2009" name="J. Bacteriol.">
        <title>Complete genome sequence of Rhodobacter sphaeroides KD131.</title>
        <authorList>
            <person name="Lim S.-K."/>
            <person name="Kim S.J."/>
            <person name="Cha S.H."/>
            <person name="Oh Y.-K."/>
            <person name="Rhee H.-J."/>
            <person name="Kim M.-S."/>
            <person name="Lee J.K."/>
        </authorList>
    </citation>
    <scope>NUCLEOTIDE SEQUENCE [LARGE SCALE GENOMIC DNA]</scope>
    <source>
        <strain>KD131 / KCTC 12085</strain>
    </source>
</reference>
<evidence type="ECO:0000255" key="1">
    <source>
        <dbReference type="HAMAP-Rule" id="MF_01152"/>
    </source>
</evidence>
<dbReference type="EMBL" id="CP001150">
    <property type="protein sequence ID" value="ACM02428.1"/>
    <property type="molecule type" value="Genomic_DNA"/>
</dbReference>
<dbReference type="RefSeq" id="WP_009563210.1">
    <property type="nucleotide sequence ID" value="NC_011963.1"/>
</dbReference>
<dbReference type="SMR" id="B9KPP3"/>
<dbReference type="GeneID" id="67447946"/>
<dbReference type="KEGG" id="rsk:RSKD131_2568"/>
<dbReference type="HOGENOM" id="CLU_017633_0_7_5"/>
<dbReference type="GO" id="GO:0005737">
    <property type="term" value="C:cytoplasm"/>
    <property type="evidence" value="ECO:0007669"/>
    <property type="project" value="UniProtKB-SubCell"/>
</dbReference>
<dbReference type="GO" id="GO:0005524">
    <property type="term" value="F:ATP binding"/>
    <property type="evidence" value="ECO:0007669"/>
    <property type="project" value="InterPro"/>
</dbReference>
<dbReference type="GO" id="GO:0031072">
    <property type="term" value="F:heat shock protein binding"/>
    <property type="evidence" value="ECO:0007669"/>
    <property type="project" value="InterPro"/>
</dbReference>
<dbReference type="GO" id="GO:0051082">
    <property type="term" value="F:unfolded protein binding"/>
    <property type="evidence" value="ECO:0007669"/>
    <property type="project" value="UniProtKB-UniRule"/>
</dbReference>
<dbReference type="GO" id="GO:0008270">
    <property type="term" value="F:zinc ion binding"/>
    <property type="evidence" value="ECO:0007669"/>
    <property type="project" value="UniProtKB-UniRule"/>
</dbReference>
<dbReference type="GO" id="GO:0051085">
    <property type="term" value="P:chaperone cofactor-dependent protein refolding"/>
    <property type="evidence" value="ECO:0007669"/>
    <property type="project" value="TreeGrafter"/>
</dbReference>
<dbReference type="GO" id="GO:0006260">
    <property type="term" value="P:DNA replication"/>
    <property type="evidence" value="ECO:0007669"/>
    <property type="project" value="UniProtKB-KW"/>
</dbReference>
<dbReference type="GO" id="GO:0042026">
    <property type="term" value="P:protein refolding"/>
    <property type="evidence" value="ECO:0007669"/>
    <property type="project" value="TreeGrafter"/>
</dbReference>
<dbReference type="GO" id="GO:0009408">
    <property type="term" value="P:response to heat"/>
    <property type="evidence" value="ECO:0007669"/>
    <property type="project" value="InterPro"/>
</dbReference>
<dbReference type="CDD" id="cd06257">
    <property type="entry name" value="DnaJ"/>
    <property type="match status" value="1"/>
</dbReference>
<dbReference type="CDD" id="cd10747">
    <property type="entry name" value="DnaJ_C"/>
    <property type="match status" value="1"/>
</dbReference>
<dbReference type="CDD" id="cd10719">
    <property type="entry name" value="DnaJ_zf"/>
    <property type="match status" value="1"/>
</dbReference>
<dbReference type="FunFam" id="1.10.287.110:FF:000034">
    <property type="entry name" value="Chaperone protein DnaJ"/>
    <property type="match status" value="1"/>
</dbReference>
<dbReference type="FunFam" id="2.10.230.10:FF:000002">
    <property type="entry name" value="Molecular chaperone DnaJ"/>
    <property type="match status" value="1"/>
</dbReference>
<dbReference type="FunFam" id="2.60.260.20:FF:000004">
    <property type="entry name" value="Molecular chaperone DnaJ"/>
    <property type="match status" value="1"/>
</dbReference>
<dbReference type="Gene3D" id="1.10.287.110">
    <property type="entry name" value="DnaJ domain"/>
    <property type="match status" value="1"/>
</dbReference>
<dbReference type="Gene3D" id="2.10.230.10">
    <property type="entry name" value="Heat shock protein DnaJ, cysteine-rich domain"/>
    <property type="match status" value="1"/>
</dbReference>
<dbReference type="Gene3D" id="2.60.260.20">
    <property type="entry name" value="Urease metallochaperone UreE, N-terminal domain"/>
    <property type="match status" value="2"/>
</dbReference>
<dbReference type="HAMAP" id="MF_01152">
    <property type="entry name" value="DnaJ"/>
    <property type="match status" value="1"/>
</dbReference>
<dbReference type="InterPro" id="IPR012724">
    <property type="entry name" value="DnaJ"/>
</dbReference>
<dbReference type="InterPro" id="IPR002939">
    <property type="entry name" value="DnaJ_C"/>
</dbReference>
<dbReference type="InterPro" id="IPR001623">
    <property type="entry name" value="DnaJ_domain"/>
</dbReference>
<dbReference type="InterPro" id="IPR018253">
    <property type="entry name" value="DnaJ_domain_CS"/>
</dbReference>
<dbReference type="InterPro" id="IPR008971">
    <property type="entry name" value="HSP40/DnaJ_pept-bd"/>
</dbReference>
<dbReference type="InterPro" id="IPR001305">
    <property type="entry name" value="HSP_DnaJ_Cys-rich_dom"/>
</dbReference>
<dbReference type="InterPro" id="IPR036410">
    <property type="entry name" value="HSP_DnaJ_Cys-rich_dom_sf"/>
</dbReference>
<dbReference type="InterPro" id="IPR036869">
    <property type="entry name" value="J_dom_sf"/>
</dbReference>
<dbReference type="NCBIfam" id="TIGR02349">
    <property type="entry name" value="DnaJ_bact"/>
    <property type="match status" value="1"/>
</dbReference>
<dbReference type="NCBIfam" id="NF008035">
    <property type="entry name" value="PRK10767.1"/>
    <property type="match status" value="1"/>
</dbReference>
<dbReference type="PANTHER" id="PTHR43096:SF48">
    <property type="entry name" value="CHAPERONE PROTEIN DNAJ"/>
    <property type="match status" value="1"/>
</dbReference>
<dbReference type="PANTHER" id="PTHR43096">
    <property type="entry name" value="DNAJ HOMOLOG 1, MITOCHONDRIAL-RELATED"/>
    <property type="match status" value="1"/>
</dbReference>
<dbReference type="Pfam" id="PF00226">
    <property type="entry name" value="DnaJ"/>
    <property type="match status" value="1"/>
</dbReference>
<dbReference type="Pfam" id="PF01556">
    <property type="entry name" value="DnaJ_C"/>
    <property type="match status" value="1"/>
</dbReference>
<dbReference type="Pfam" id="PF00684">
    <property type="entry name" value="DnaJ_CXXCXGXG"/>
    <property type="match status" value="1"/>
</dbReference>
<dbReference type="PRINTS" id="PR00625">
    <property type="entry name" value="JDOMAIN"/>
</dbReference>
<dbReference type="SMART" id="SM00271">
    <property type="entry name" value="DnaJ"/>
    <property type="match status" value="1"/>
</dbReference>
<dbReference type="SUPFAM" id="SSF46565">
    <property type="entry name" value="Chaperone J-domain"/>
    <property type="match status" value="1"/>
</dbReference>
<dbReference type="SUPFAM" id="SSF57938">
    <property type="entry name" value="DnaJ/Hsp40 cysteine-rich domain"/>
    <property type="match status" value="1"/>
</dbReference>
<dbReference type="SUPFAM" id="SSF49493">
    <property type="entry name" value="HSP40/DnaJ peptide-binding domain"/>
    <property type="match status" value="2"/>
</dbReference>
<dbReference type="PROSITE" id="PS00636">
    <property type="entry name" value="DNAJ_1"/>
    <property type="match status" value="1"/>
</dbReference>
<dbReference type="PROSITE" id="PS50076">
    <property type="entry name" value="DNAJ_2"/>
    <property type="match status" value="1"/>
</dbReference>
<dbReference type="PROSITE" id="PS51188">
    <property type="entry name" value="ZF_CR"/>
    <property type="match status" value="1"/>
</dbReference>
<gene>
    <name evidence="1" type="primary">dnaJ</name>
    <name type="ordered locus">RSKD131_2568</name>
</gene>
<feature type="chain" id="PRO_1000164276" description="Chaperone protein DnaJ">
    <location>
        <begin position="1"/>
        <end position="381"/>
    </location>
</feature>
<feature type="domain" description="J" evidence="1">
    <location>
        <begin position="5"/>
        <end position="70"/>
    </location>
</feature>
<feature type="repeat" description="CXXCXGXG motif">
    <location>
        <begin position="153"/>
        <end position="160"/>
    </location>
</feature>
<feature type="repeat" description="CXXCXGXG motif">
    <location>
        <begin position="170"/>
        <end position="177"/>
    </location>
</feature>
<feature type="repeat" description="CXXCXGXG motif">
    <location>
        <begin position="192"/>
        <end position="199"/>
    </location>
</feature>
<feature type="repeat" description="CXXCXGXG motif">
    <location>
        <begin position="206"/>
        <end position="213"/>
    </location>
</feature>
<feature type="zinc finger region" description="CR-type" evidence="1">
    <location>
        <begin position="140"/>
        <end position="218"/>
    </location>
</feature>
<feature type="binding site" evidence="1">
    <location>
        <position position="153"/>
    </location>
    <ligand>
        <name>Zn(2+)</name>
        <dbReference type="ChEBI" id="CHEBI:29105"/>
        <label>1</label>
    </ligand>
</feature>
<feature type="binding site" evidence="1">
    <location>
        <position position="156"/>
    </location>
    <ligand>
        <name>Zn(2+)</name>
        <dbReference type="ChEBI" id="CHEBI:29105"/>
        <label>1</label>
    </ligand>
</feature>
<feature type="binding site" evidence="1">
    <location>
        <position position="170"/>
    </location>
    <ligand>
        <name>Zn(2+)</name>
        <dbReference type="ChEBI" id="CHEBI:29105"/>
        <label>2</label>
    </ligand>
</feature>
<feature type="binding site" evidence="1">
    <location>
        <position position="173"/>
    </location>
    <ligand>
        <name>Zn(2+)</name>
        <dbReference type="ChEBI" id="CHEBI:29105"/>
        <label>2</label>
    </ligand>
</feature>
<feature type="binding site" evidence="1">
    <location>
        <position position="192"/>
    </location>
    <ligand>
        <name>Zn(2+)</name>
        <dbReference type="ChEBI" id="CHEBI:29105"/>
        <label>2</label>
    </ligand>
</feature>
<feature type="binding site" evidence="1">
    <location>
        <position position="195"/>
    </location>
    <ligand>
        <name>Zn(2+)</name>
        <dbReference type="ChEBI" id="CHEBI:29105"/>
        <label>2</label>
    </ligand>
</feature>
<feature type="binding site" evidence="1">
    <location>
        <position position="206"/>
    </location>
    <ligand>
        <name>Zn(2+)</name>
        <dbReference type="ChEBI" id="CHEBI:29105"/>
        <label>1</label>
    </ligand>
</feature>
<feature type="binding site" evidence="1">
    <location>
        <position position="209"/>
    </location>
    <ligand>
        <name>Zn(2+)</name>
        <dbReference type="ChEBI" id="CHEBI:29105"/>
        <label>1</label>
    </ligand>
</feature>
<name>DNAJ_CERSK</name>
<comment type="function">
    <text evidence="1">Participates actively in the response to hyperosmotic and heat shock by preventing the aggregation of stress-denatured proteins and by disaggregating proteins, also in an autonomous, DnaK-independent fashion. Unfolded proteins bind initially to DnaJ; upon interaction with the DnaJ-bound protein, DnaK hydrolyzes its bound ATP, resulting in the formation of a stable complex. GrpE releases ADP from DnaK; ATP binding to DnaK triggers the release of the substrate protein, thus completing the reaction cycle. Several rounds of ATP-dependent interactions between DnaJ, DnaK and GrpE are required for fully efficient folding. Also involved, together with DnaK and GrpE, in the DNA replication of plasmids through activation of initiation proteins.</text>
</comment>
<comment type="cofactor">
    <cofactor evidence="1">
        <name>Zn(2+)</name>
        <dbReference type="ChEBI" id="CHEBI:29105"/>
    </cofactor>
    <text evidence="1">Binds 2 Zn(2+) ions per monomer.</text>
</comment>
<comment type="subunit">
    <text evidence="1">Homodimer.</text>
</comment>
<comment type="subcellular location">
    <subcellularLocation>
        <location evidence="1">Cytoplasm</location>
    </subcellularLocation>
</comment>
<comment type="domain">
    <text evidence="1">The J domain is necessary and sufficient to stimulate DnaK ATPase activity. Zinc center 1 plays an important role in the autonomous, DnaK-independent chaperone activity of DnaJ. Zinc center 2 is essential for interaction with DnaK and for DnaJ activity.</text>
</comment>
<comment type="similarity">
    <text evidence="1">Belongs to the DnaJ family.</text>
</comment>